<accession>P85123</accession>
<dbReference type="SMR" id="P85123"/>
<dbReference type="HOGENOM" id="CLU_3322199_0_0_1"/>
<dbReference type="Proteomes" id="UP000694400">
    <property type="component" value="Unplaced"/>
</dbReference>
<dbReference type="GO" id="GO:0005576">
    <property type="term" value="C:extracellular region"/>
    <property type="evidence" value="ECO:0007669"/>
    <property type="project" value="UniProtKB-SubCell"/>
</dbReference>
<dbReference type="Gene3D" id="3.10.360.10">
    <property type="entry name" value="Antimicrobial Peptide, Beta-defensin 2, Chain A"/>
    <property type="match status" value="1"/>
</dbReference>
<feature type="peptide" id="PRO_0000284705" description="Small basic protein 1" evidence="2">
    <location>
        <begin position="1"/>
        <end position="39"/>
    </location>
</feature>
<feature type="modified residue" description="Pyrrolidone carboxylic acid" evidence="2">
    <location>
        <position position="1"/>
    </location>
</feature>
<feature type="disulfide bond" description="Or C-6 with C-31" evidence="2">
    <location>
        <begin position="6"/>
        <end position="32"/>
    </location>
</feature>
<feature type="disulfide bond" evidence="2">
    <location>
        <begin position="10"/>
        <end position="26"/>
    </location>
</feature>
<feature type="disulfide bond" description="Or C-14 with C-32" evidence="2">
    <location>
        <begin position="14"/>
        <end position="31"/>
    </location>
</feature>
<organism>
    <name type="scientific">Anas platyrhynchos</name>
    <name type="common">Mallard</name>
    <name type="synonym">Anas boschas</name>
    <dbReference type="NCBI Taxonomy" id="8839"/>
    <lineage>
        <taxon>Eukaryota</taxon>
        <taxon>Metazoa</taxon>
        <taxon>Chordata</taxon>
        <taxon>Craniata</taxon>
        <taxon>Vertebrata</taxon>
        <taxon>Euteleostomi</taxon>
        <taxon>Archelosauria</taxon>
        <taxon>Archosauria</taxon>
        <taxon>Dinosauria</taxon>
        <taxon>Saurischia</taxon>
        <taxon>Theropoda</taxon>
        <taxon>Coelurosauria</taxon>
        <taxon>Aves</taxon>
        <taxon>Neognathae</taxon>
        <taxon>Galloanserae</taxon>
        <taxon>Anseriformes</taxon>
        <taxon>Anatidae</taxon>
        <taxon>Anatinae</taxon>
        <taxon>Anas</taxon>
    </lineage>
</organism>
<name>BPS1_ANAPL</name>
<evidence type="ECO:0000255" key="1"/>
<evidence type="ECO:0000269" key="2">
    <source>
    </source>
</evidence>
<evidence type="ECO:0000305" key="3"/>
<sequence>QKKGFCAGYCSYSCAKTDEWTFHQTCGKMYCCIPPPKKG</sequence>
<proteinExistence type="evidence at protein level"/>
<reference evidence="3" key="1">
    <citation type="journal article" date="2008" name="Biosci. Biotechnol. Biochem.">
        <title>Structural and physicochemical characteristics of novel basic proteins isolated from duck egg white.</title>
        <authorList>
            <person name="Naknukool S."/>
            <person name="Hayakawa S."/>
            <person name="Sun Y."/>
            <person name="Ogawa M."/>
        </authorList>
    </citation>
    <scope>PROTEIN SEQUENCE</scope>
    <scope>BIOPHYSICOCHEMICAL PROPERTIES</scope>
    <scope>MASS SPECTROMETRY</scope>
    <scope>PYROGLUTAMATE FORMATION AT GLN-1</scope>
    <scope>DISULFIDE BONDS</scope>
    <source>
        <tissue evidence="2">Egg white</tissue>
    </source>
</reference>
<protein>
    <recommendedName>
        <fullName>Small basic protein 1</fullName>
    </recommendedName>
    <alternativeName>
        <fullName>Basic protein small 1</fullName>
        <shortName>dBPS1</shortName>
    </alternativeName>
</protein>
<keyword id="KW-0903">Direct protein sequencing</keyword>
<keyword id="KW-1015">Disulfide bond</keyword>
<keyword id="KW-0873">Pyrrolidone carboxylic acid</keyword>
<keyword id="KW-0964">Secreted</keyword>
<comment type="biophysicochemical properties">
    <temperatureDependence>
        <text evidence="2">Denaturation temperature (Td) is 101.2 degrees Celsius.</text>
    </temperatureDependence>
</comment>
<comment type="subcellular location">
    <subcellularLocation>
        <location evidence="3">Secreted</location>
    </subcellularLocation>
</comment>
<comment type="mass spectrometry"/>
<comment type="similarity">
    <text evidence="1">Belongs to the transferrin family.</text>
</comment>